<sequence length="237" mass="26870">MRKVTLVFSAIAFAFSLNGVVQAKVQMPESVSSGVTTVELSQRQAVHWVSVEQIEKSLQDQPPMAIGFDIDDTVLFSSPGFYRGKLKYSPNDNSYLKNPAFWEKMNNEWDEFSMPKQIGIELVQMHLKRGDNIYFITGRTKTKTETVTKYLQEDLHIPADKMNVVIFAGDDPGKNNKISWMKEHKLKLYYGDADADIAAAHELNIRGIRILRASNSSYQPLPKAGRFGEEVVIKSEY</sequence>
<protein>
    <recommendedName>
        <fullName evidence="1 3">Class B acid phosphatase</fullName>
        <shortName evidence="1">CBAP</shortName>
        <ecNumber evidence="1 3">3.1.3.2</ecNumber>
    </recommendedName>
</protein>
<organism>
    <name type="scientific">Xenorhabdus bovienii (strain SS-2004)</name>
    <name type="common">Xenorhabdus nematophila subsp. bovienii</name>
    <dbReference type="NCBI Taxonomy" id="406818"/>
    <lineage>
        <taxon>Bacteria</taxon>
        <taxon>Pseudomonadati</taxon>
        <taxon>Pseudomonadota</taxon>
        <taxon>Gammaproteobacteria</taxon>
        <taxon>Enterobacterales</taxon>
        <taxon>Morganellaceae</taxon>
        <taxon>Xenorhabdus</taxon>
    </lineage>
</organism>
<reference evidence="3" key="1">
    <citation type="journal article" date="2011" name="PLoS ONE">
        <title>The entomopathogenic bacterial endosymbionts xenorhabdus and photorhabdus: convergent lifestyles from divergent genomes.</title>
        <authorList>
            <person name="Chaston J.M."/>
            <person name="Suen G."/>
            <person name="Tucker S.L."/>
            <person name="Andersen A.W."/>
            <person name="Bhasin A."/>
            <person name="Bode E."/>
            <person name="Bode H.B."/>
            <person name="Brachmann A.O."/>
            <person name="Cowles C.E."/>
            <person name="Cowles K.N."/>
            <person name="Darby C."/>
            <person name="de Leon L."/>
            <person name="Drace K."/>
            <person name="Du Z."/>
            <person name="Givaudan A."/>
            <person name="Herbert Tran E.E."/>
            <person name="Jewell K.A."/>
            <person name="Knack J.J."/>
            <person name="Krasomil-Osterfeld K.C."/>
            <person name="Kukor R."/>
            <person name="Lanois A."/>
            <person name="Latreille P."/>
            <person name="Leimgruber N.K."/>
            <person name="Lipke C.M."/>
            <person name="Liu R."/>
            <person name="Lu X."/>
            <person name="Martens E.C."/>
            <person name="Marri P.R."/>
            <person name="Medigue C."/>
            <person name="Menard M.L."/>
            <person name="Miller N.M."/>
            <person name="Morales-Soto N."/>
            <person name="Norton S."/>
            <person name="Ogier J.C."/>
            <person name="Orchard S.S."/>
            <person name="Park D."/>
            <person name="Park Y."/>
            <person name="Qurollo B.A."/>
            <person name="Sugar D.R."/>
            <person name="Richards G.R."/>
            <person name="Rouy Z."/>
            <person name="Slominski B."/>
            <person name="Slominski K."/>
            <person name="Snyder H."/>
            <person name="Tjaden B.C."/>
            <person name="van der Hoeven R."/>
            <person name="Welch R.D."/>
            <person name="Wheeler C."/>
            <person name="Xiang B."/>
            <person name="Barbazuk B."/>
            <person name="Gaudriault S."/>
            <person name="Goodner B."/>
            <person name="Slater S.C."/>
            <person name="Forst S."/>
            <person name="Goldman B.S."/>
            <person name="Goodrich-Blair H."/>
        </authorList>
    </citation>
    <scope>NUCLEOTIDE SEQUENCE [LARGE SCALE GENOMIC DNA]</scope>
    <source>
        <strain>SS-2004</strain>
    </source>
</reference>
<comment type="function">
    <text evidence="1">Dephosphorylates several organic phosphate monoesters. Also has a phosphotransferase activity catalyzing the transfer of low-energy phosphate groups from organic phosphate monoesters to free hydroxyl groups of various organic compounds (By similarity).</text>
</comment>
<comment type="catalytic activity">
    <reaction evidence="1">
        <text>a phosphate monoester + H2O = an alcohol + phosphate</text>
        <dbReference type="Rhea" id="RHEA:15017"/>
        <dbReference type="ChEBI" id="CHEBI:15377"/>
        <dbReference type="ChEBI" id="CHEBI:30879"/>
        <dbReference type="ChEBI" id="CHEBI:43474"/>
        <dbReference type="ChEBI" id="CHEBI:67140"/>
        <dbReference type="EC" id="3.1.3.2"/>
    </reaction>
</comment>
<comment type="cofactor">
    <cofactor evidence="1">
        <name>Mg(2+)</name>
        <dbReference type="ChEBI" id="CHEBI:18420"/>
    </cofactor>
    <text evidence="1">Binds 1 Mg(2+) ion per subunit.</text>
</comment>
<comment type="subunit">
    <text evidence="1">Homotetramer.</text>
</comment>
<comment type="subcellular location">
    <subcellularLocation>
        <location evidence="1">Periplasm</location>
    </subcellularLocation>
</comment>
<comment type="similarity">
    <text evidence="1">Belongs to the class B bacterial acid phosphatase family.</text>
</comment>
<keyword id="KW-0378">Hydrolase</keyword>
<keyword id="KW-0460">Magnesium</keyword>
<keyword id="KW-0479">Metal-binding</keyword>
<keyword id="KW-0574">Periplasm</keyword>
<keyword id="KW-0732">Signal</keyword>
<name>APHA_XENBS</name>
<gene>
    <name evidence="3" type="primary">aphA</name>
    <name type="ordered locus">XBJ1_0800</name>
</gene>
<dbReference type="EC" id="3.1.3.2" evidence="1 3"/>
<dbReference type="EMBL" id="FN667741">
    <property type="protein sequence ID" value="CBJ79941.1"/>
    <property type="molecule type" value="Genomic_DNA"/>
</dbReference>
<dbReference type="RefSeq" id="WP_012987374.1">
    <property type="nucleotide sequence ID" value="NC_013892.1"/>
</dbReference>
<dbReference type="SMR" id="D3UWV6"/>
<dbReference type="STRING" id="406818.XBJ1_0800"/>
<dbReference type="KEGG" id="xbo:XBJ1_0800"/>
<dbReference type="PATRIC" id="fig|406818.4.peg.721"/>
<dbReference type="eggNOG" id="COG3700">
    <property type="taxonomic scope" value="Bacteria"/>
</dbReference>
<dbReference type="HOGENOM" id="CLU_081496_0_0_6"/>
<dbReference type="Proteomes" id="UP000002045">
    <property type="component" value="Chromosome"/>
</dbReference>
<dbReference type="GO" id="GO:0030288">
    <property type="term" value="C:outer membrane-bounded periplasmic space"/>
    <property type="evidence" value="ECO:0007669"/>
    <property type="project" value="InterPro"/>
</dbReference>
<dbReference type="GO" id="GO:0003993">
    <property type="term" value="F:acid phosphatase activity"/>
    <property type="evidence" value="ECO:0007669"/>
    <property type="project" value="UniProtKB-EC"/>
</dbReference>
<dbReference type="GO" id="GO:0046872">
    <property type="term" value="F:metal ion binding"/>
    <property type="evidence" value="ECO:0007669"/>
    <property type="project" value="UniProtKB-KW"/>
</dbReference>
<dbReference type="Gene3D" id="3.40.50.1000">
    <property type="entry name" value="HAD superfamily/HAD-like"/>
    <property type="match status" value="1"/>
</dbReference>
<dbReference type="InterPro" id="IPR005519">
    <property type="entry name" value="Acid_phosphat_B-like"/>
</dbReference>
<dbReference type="InterPro" id="IPR036412">
    <property type="entry name" value="HAD-like_sf"/>
</dbReference>
<dbReference type="InterPro" id="IPR010025">
    <property type="entry name" value="HAD-SF_ppase_IIIB_AphA"/>
</dbReference>
<dbReference type="InterPro" id="IPR023214">
    <property type="entry name" value="HAD_sf"/>
</dbReference>
<dbReference type="NCBIfam" id="TIGR01672">
    <property type="entry name" value="AphA"/>
    <property type="match status" value="1"/>
</dbReference>
<dbReference type="Pfam" id="PF03767">
    <property type="entry name" value="Acid_phosphat_B"/>
    <property type="match status" value="1"/>
</dbReference>
<dbReference type="PIRSF" id="PIRSF017818">
    <property type="entry name" value="Acid_Ptase_B"/>
    <property type="match status" value="1"/>
</dbReference>
<dbReference type="SFLD" id="SFLDG01127">
    <property type="entry name" value="C1.3:_Acid_Phosphatase_Like"/>
    <property type="match status" value="1"/>
</dbReference>
<dbReference type="SFLD" id="SFLDS00003">
    <property type="entry name" value="Haloacid_Dehalogenase"/>
    <property type="match status" value="1"/>
</dbReference>
<dbReference type="SUPFAM" id="SSF56784">
    <property type="entry name" value="HAD-like"/>
    <property type="match status" value="1"/>
</dbReference>
<proteinExistence type="inferred from homology"/>
<evidence type="ECO:0000250" key="1">
    <source>
        <dbReference type="UniProtKB" id="P0AE22"/>
    </source>
</evidence>
<evidence type="ECO:0000255" key="2"/>
<evidence type="ECO:0000312" key="3">
    <source>
        <dbReference type="EMBL" id="CBJ79941.1"/>
    </source>
</evidence>
<accession>D3UWV6</accession>
<feature type="signal peptide" evidence="2">
    <location>
        <begin position="1"/>
        <end position="23"/>
    </location>
</feature>
<feature type="chain" id="PRO_0000415230" description="Class B acid phosphatase" evidence="2">
    <location>
        <begin position="24"/>
        <end position="237"/>
    </location>
</feature>
<feature type="active site" description="Nucleophile" evidence="1">
    <location>
        <position position="69"/>
    </location>
</feature>
<feature type="active site" description="Proton donor" evidence="1">
    <location>
        <position position="71"/>
    </location>
</feature>
<feature type="binding site" evidence="1">
    <location>
        <position position="69"/>
    </location>
    <ligand>
        <name>Mg(2+)</name>
        <dbReference type="ChEBI" id="CHEBI:18420"/>
    </ligand>
</feature>
<feature type="binding site" evidence="1">
    <location>
        <position position="71"/>
    </location>
    <ligand>
        <name>Mg(2+)</name>
        <dbReference type="ChEBI" id="CHEBI:18420"/>
    </ligand>
</feature>
<feature type="binding site" evidence="1">
    <location>
        <begin position="137"/>
        <end position="138"/>
    </location>
    <ligand>
        <name>substrate</name>
    </ligand>
</feature>
<feature type="binding site" evidence="1">
    <location>
        <position position="177"/>
    </location>
    <ligand>
        <name>substrate</name>
    </ligand>
</feature>
<feature type="binding site" evidence="1">
    <location>
        <position position="192"/>
    </location>
    <ligand>
        <name>Mg(2+)</name>
        <dbReference type="ChEBI" id="CHEBI:18420"/>
    </ligand>
</feature>